<feature type="chain" id="PRO_0000271360" description="Uncharacterized protein C6orf163 homolog">
    <location>
        <begin position="1"/>
        <end position="329"/>
    </location>
</feature>
<feature type="coiled-coil region" evidence="1">
    <location>
        <begin position="56"/>
        <end position="247"/>
    </location>
</feature>
<dbReference type="EMBL" id="BC110024">
    <property type="protein sequence ID" value="AAI10025.1"/>
    <property type="molecule type" value="mRNA"/>
</dbReference>
<dbReference type="RefSeq" id="NP_001073240.1">
    <property type="nucleotide sequence ID" value="NM_001079772.2"/>
</dbReference>
<dbReference type="SMR" id="Q2TBK0"/>
<dbReference type="FunCoup" id="Q2TBK0">
    <property type="interactions" value="14"/>
</dbReference>
<dbReference type="PaxDb" id="9913-ENSBTAP00000023768"/>
<dbReference type="Ensembl" id="ENSBTAT00000023768.5">
    <property type="protein sequence ID" value="ENSBTAP00000023768.4"/>
    <property type="gene ID" value="ENSBTAG00000017879.5"/>
</dbReference>
<dbReference type="GeneID" id="513016"/>
<dbReference type="KEGG" id="bta:513016"/>
<dbReference type="CTD" id="513016"/>
<dbReference type="VEuPathDB" id="HostDB:ENSBTAG00000017879"/>
<dbReference type="VGNC" id="VGNC:52745">
    <property type="gene designation" value="C9H6orf163"/>
</dbReference>
<dbReference type="eggNOG" id="ENOG502RDFA">
    <property type="taxonomic scope" value="Eukaryota"/>
</dbReference>
<dbReference type="GeneTree" id="ENSGT00390000010837"/>
<dbReference type="HOGENOM" id="CLU_836681_0_0_1"/>
<dbReference type="InParanoid" id="Q2TBK0"/>
<dbReference type="OMA" id="NYTNFVC"/>
<dbReference type="OrthoDB" id="8774892at2759"/>
<dbReference type="TreeFam" id="TF335705"/>
<dbReference type="Proteomes" id="UP000009136">
    <property type="component" value="Chromosome 9"/>
</dbReference>
<dbReference type="Bgee" id="ENSBTAG00000017879">
    <property type="expression patterns" value="Expressed in semen and 102 other cell types or tissues"/>
</dbReference>
<dbReference type="InterPro" id="IPR038927">
    <property type="entry name" value="C6orf163"/>
</dbReference>
<dbReference type="PANTHER" id="PTHR34645:SF1">
    <property type="entry name" value="GENE 136-RELATED"/>
    <property type="match status" value="1"/>
</dbReference>
<dbReference type="PANTHER" id="PTHR34645">
    <property type="entry name" value="SIMILAR TO HYPOTHETICAL PROTEIN"/>
    <property type="match status" value="1"/>
</dbReference>
<protein>
    <recommendedName>
        <fullName>Uncharacterized protein C6orf163 homolog</fullName>
    </recommendedName>
</protein>
<sequence length="329" mass="38993">MIRNPNYTNFVCCAVCNKIIPPAPFGETFKRIHEYKPFKTRFYTHKDILDIGKDILNKEEQFQEDALKERIAQAEADIWAKADERQRQAVKKALEEANDMYKMQIQFLKEEHEKELKEMATRTKMQLHKNLEEELQREHLAAEQRMVHRIQRIMMECHREKVQAVQEAREQERLMAQEEIQSQRRKAMEELMSSGVTVVKDQKKNVNQLIKEKQHEMNLYYCMTQRQKQEEVQEVLQEAEKTHQAKLGSVMDKLVNTQGELLSIAKQLGIMTNWKDFLEEELQETRAAFQKYINYTFPKLSPGHADFILPERKKTPSNLIIPENQTTPD</sequence>
<proteinExistence type="evidence at transcript level"/>
<accession>Q2TBK0</accession>
<keyword id="KW-0175">Coiled coil</keyword>
<keyword id="KW-1185">Reference proteome</keyword>
<organism>
    <name type="scientific">Bos taurus</name>
    <name type="common">Bovine</name>
    <dbReference type="NCBI Taxonomy" id="9913"/>
    <lineage>
        <taxon>Eukaryota</taxon>
        <taxon>Metazoa</taxon>
        <taxon>Chordata</taxon>
        <taxon>Craniata</taxon>
        <taxon>Vertebrata</taxon>
        <taxon>Euteleostomi</taxon>
        <taxon>Mammalia</taxon>
        <taxon>Eutheria</taxon>
        <taxon>Laurasiatheria</taxon>
        <taxon>Artiodactyla</taxon>
        <taxon>Ruminantia</taxon>
        <taxon>Pecora</taxon>
        <taxon>Bovidae</taxon>
        <taxon>Bovinae</taxon>
        <taxon>Bos</taxon>
    </lineage>
</organism>
<evidence type="ECO:0000255" key="1"/>
<reference key="1">
    <citation type="submission" date="2005-11" db="EMBL/GenBank/DDBJ databases">
        <authorList>
            <consortium name="NIH - Mammalian Gene Collection (MGC) project"/>
        </authorList>
    </citation>
    <scope>NUCLEOTIDE SEQUENCE [LARGE SCALE MRNA]</scope>
    <source>
        <strain>Crossbred X Angus</strain>
        <tissue>Liver</tissue>
    </source>
</reference>
<name>CF163_BOVIN</name>